<dbReference type="EMBL" id="BC107551">
    <property type="protein sequence ID" value="AAI07552.1"/>
    <property type="molecule type" value="mRNA"/>
</dbReference>
<dbReference type="RefSeq" id="NP_001032907.1">
    <property type="nucleotide sequence ID" value="NM_001037818.1"/>
</dbReference>
<dbReference type="SMR" id="Q3B7L8"/>
<dbReference type="FunCoup" id="Q3B7L8">
    <property type="interactions" value="3173"/>
</dbReference>
<dbReference type="STRING" id="9913.ENSBTAP00000040478"/>
<dbReference type="PaxDb" id="9913-ENSBTAP00000040478"/>
<dbReference type="GeneID" id="512330"/>
<dbReference type="KEGG" id="bta:512330"/>
<dbReference type="CTD" id="55696"/>
<dbReference type="eggNOG" id="KOG0153">
    <property type="taxonomic scope" value="Eukaryota"/>
</dbReference>
<dbReference type="InParanoid" id="Q3B7L8"/>
<dbReference type="OrthoDB" id="10259600at2759"/>
<dbReference type="Proteomes" id="UP000009136">
    <property type="component" value="Unplaced"/>
</dbReference>
<dbReference type="GO" id="GO:0005737">
    <property type="term" value="C:cytoplasm"/>
    <property type="evidence" value="ECO:0000250"/>
    <property type="project" value="UniProtKB"/>
</dbReference>
<dbReference type="GO" id="GO:0005634">
    <property type="term" value="C:nucleus"/>
    <property type="evidence" value="ECO:0000250"/>
    <property type="project" value="UniProtKB"/>
</dbReference>
<dbReference type="GO" id="GO:0000974">
    <property type="term" value="C:Prp19 complex"/>
    <property type="evidence" value="ECO:0000318"/>
    <property type="project" value="GO_Central"/>
</dbReference>
<dbReference type="GO" id="GO:0071006">
    <property type="term" value="C:U2-type catalytic step 1 spliceosome"/>
    <property type="evidence" value="ECO:0000318"/>
    <property type="project" value="GO_Central"/>
</dbReference>
<dbReference type="GO" id="GO:0071007">
    <property type="term" value="C:U2-type catalytic step 2 spliceosome"/>
    <property type="evidence" value="ECO:0000318"/>
    <property type="project" value="GO_Central"/>
</dbReference>
<dbReference type="GO" id="GO:0036002">
    <property type="term" value="F:pre-mRNA binding"/>
    <property type="evidence" value="ECO:0000250"/>
    <property type="project" value="UniProtKB"/>
</dbReference>
<dbReference type="GO" id="GO:0017070">
    <property type="term" value="F:U6 snRNA binding"/>
    <property type="evidence" value="ECO:0000250"/>
    <property type="project" value="UniProtKB"/>
</dbReference>
<dbReference type="GO" id="GO:0008270">
    <property type="term" value="F:zinc ion binding"/>
    <property type="evidence" value="ECO:0007669"/>
    <property type="project" value="UniProtKB-KW"/>
</dbReference>
<dbReference type="GO" id="GO:0071466">
    <property type="term" value="P:cellular response to xenobiotic stimulus"/>
    <property type="evidence" value="ECO:0000250"/>
    <property type="project" value="UniProtKB"/>
</dbReference>
<dbReference type="GO" id="GO:0045292">
    <property type="term" value="P:mRNA cis splicing, via spliceosome"/>
    <property type="evidence" value="ECO:0000250"/>
    <property type="project" value="UniProtKB"/>
</dbReference>
<dbReference type="GO" id="GO:0046827">
    <property type="term" value="P:positive regulation of protein export from nucleus"/>
    <property type="evidence" value="ECO:0000250"/>
    <property type="project" value="UniProtKB"/>
</dbReference>
<dbReference type="GO" id="GO:0042307">
    <property type="term" value="P:positive regulation of protein import into nucleus"/>
    <property type="evidence" value="ECO:0000250"/>
    <property type="project" value="UniProtKB"/>
</dbReference>
<dbReference type="GO" id="GO:0033120">
    <property type="term" value="P:positive regulation of RNA splicing"/>
    <property type="evidence" value="ECO:0000250"/>
    <property type="project" value="UniProtKB"/>
</dbReference>
<dbReference type="CDD" id="cd12224">
    <property type="entry name" value="RRM_RBM22"/>
    <property type="match status" value="1"/>
</dbReference>
<dbReference type="FunFam" id="3.30.70.330:FF:000137">
    <property type="entry name" value="pre-mRNA-splicing factor RBM22"/>
    <property type="match status" value="1"/>
</dbReference>
<dbReference type="FunFam" id="4.10.1000.10:FF:000006">
    <property type="entry name" value="Putative pre-mrna-splicing factor rbm22"/>
    <property type="match status" value="1"/>
</dbReference>
<dbReference type="Gene3D" id="3.30.70.330">
    <property type="match status" value="1"/>
</dbReference>
<dbReference type="Gene3D" id="4.10.1000.10">
    <property type="entry name" value="Zinc finger, CCCH-type"/>
    <property type="match status" value="1"/>
</dbReference>
<dbReference type="InterPro" id="IPR039171">
    <property type="entry name" value="Cwc2/Slt11"/>
</dbReference>
<dbReference type="InterPro" id="IPR012677">
    <property type="entry name" value="Nucleotide-bd_a/b_plait_sf"/>
</dbReference>
<dbReference type="InterPro" id="IPR035979">
    <property type="entry name" value="RBD_domain_sf"/>
</dbReference>
<dbReference type="InterPro" id="IPR000504">
    <property type="entry name" value="RRM_dom"/>
</dbReference>
<dbReference type="InterPro" id="IPR048995">
    <property type="entry name" value="STL11/RBM22-like_N"/>
</dbReference>
<dbReference type="InterPro" id="IPR000571">
    <property type="entry name" value="Znf_CCCH"/>
</dbReference>
<dbReference type="InterPro" id="IPR036855">
    <property type="entry name" value="Znf_CCCH_sf"/>
</dbReference>
<dbReference type="PANTHER" id="PTHR14089">
    <property type="entry name" value="PRE-MRNA-SPLICING FACTOR RBM22"/>
    <property type="match status" value="1"/>
</dbReference>
<dbReference type="PANTHER" id="PTHR14089:SF18">
    <property type="entry name" value="PRE-MRNA-SPLICING FACTOR RBM22"/>
    <property type="match status" value="1"/>
</dbReference>
<dbReference type="Pfam" id="PF00076">
    <property type="entry name" value="RRM_1"/>
    <property type="match status" value="1"/>
</dbReference>
<dbReference type="Pfam" id="PF21369">
    <property type="entry name" value="STL11_N"/>
    <property type="match status" value="1"/>
</dbReference>
<dbReference type="SMART" id="SM00360">
    <property type="entry name" value="RRM"/>
    <property type="match status" value="1"/>
</dbReference>
<dbReference type="SMART" id="SM00356">
    <property type="entry name" value="ZnF_C3H1"/>
    <property type="match status" value="1"/>
</dbReference>
<dbReference type="SUPFAM" id="SSF90229">
    <property type="entry name" value="CCCH zinc finger"/>
    <property type="match status" value="1"/>
</dbReference>
<dbReference type="SUPFAM" id="SSF54928">
    <property type="entry name" value="RNA-binding domain, RBD"/>
    <property type="match status" value="1"/>
</dbReference>
<dbReference type="PROSITE" id="PS50102">
    <property type="entry name" value="RRM"/>
    <property type="match status" value="1"/>
</dbReference>
<dbReference type="PROSITE" id="PS50103">
    <property type="entry name" value="ZF_C3H1"/>
    <property type="match status" value="1"/>
</dbReference>
<proteinExistence type="evidence at transcript level"/>
<protein>
    <recommendedName>
        <fullName>Pre-mRNA-splicing factor RBM22</fullName>
    </recommendedName>
    <alternativeName>
        <fullName>RNA-binding motif protein 22</fullName>
    </alternativeName>
</protein>
<name>RBM22_BOVIN</name>
<accession>Q3B7L8</accession>
<feature type="initiator methionine" description="Removed" evidence="2">
    <location>
        <position position="1"/>
    </location>
</feature>
<feature type="chain" id="PRO_0000250545" description="Pre-mRNA-splicing factor RBM22">
    <location>
        <begin position="2"/>
        <end position="420"/>
    </location>
</feature>
<feature type="domain" description="RRM" evidence="3">
    <location>
        <begin position="232"/>
        <end position="305"/>
    </location>
</feature>
<feature type="zinc finger region" description="C3H1-type" evidence="4">
    <location>
        <begin position="159"/>
        <end position="186"/>
    </location>
</feature>
<feature type="region of interest" description="Disordered" evidence="5">
    <location>
        <begin position="303"/>
        <end position="343"/>
    </location>
</feature>
<feature type="region of interest" description="Disordered" evidence="5">
    <location>
        <begin position="372"/>
        <end position="420"/>
    </location>
</feature>
<feature type="compositionally biased region" description="Basic and acidic residues" evidence="5">
    <location>
        <begin position="309"/>
        <end position="318"/>
    </location>
</feature>
<feature type="modified residue" description="N-acetylalanine" evidence="2">
    <location>
        <position position="2"/>
    </location>
</feature>
<feature type="modified residue" description="Phosphoserine" evidence="2">
    <location>
        <position position="4"/>
    </location>
</feature>
<feature type="modified residue" description="Phosphoserine" evidence="2">
    <location>
        <position position="102"/>
    </location>
</feature>
<feature type="modified residue" description="N6-acetyllysine" evidence="2">
    <location>
        <position position="212"/>
    </location>
</feature>
<feature type="cross-link" description="Glycyl lysine isopeptide (Lys-Gly) (interchain with G-Cter in SUMO2)" evidence="2">
    <location>
        <position position="139"/>
    </location>
</feature>
<feature type="cross-link" description="Glycyl lysine isopeptide (Lys-Gly) (interchain with G-Cter in SUMO2)" evidence="2">
    <location>
        <position position="149"/>
    </location>
</feature>
<feature type="cross-link" description="Glycyl lysine isopeptide (Lys-Gly) (interchain with G-Cter in SUMO2)" evidence="2">
    <location>
        <position position="290"/>
    </location>
</feature>
<sequence length="420" mass="46930">MATSLGSNTYNRQNWEDADFPILCQTCLGENPYIRMTKEKYGKECKICARPFTVFRWCPGVRMRFKKTEVCQTCSKLKNVCQTCLLDLEYGLPIQVRDAGLSFKDDMPKSDVNKEYYTQNMEREISNSDGTRPVGMLGKATSTSDMLLKLARTTPYYKRNRPHICSFWVKGECKRGEECPYRHEKPTDPDDPLADQNIKDRYYGINDPVADKLLKRASTMPRLDPPEDKTITTLYVGGLGDTITETDLRNHFYQFGEIRTITVVQRQQCAFIQFATRQAAEVAAEKSFNKFIVNGRRLNVKWGRSQAARGKEKEKDGTTDSGIKLEPVPGLPGALPPPPAAEEEASANYFNLPPSGPPAVVNIALPPPPGIAPPPPPGFGPHMFHPMGPPPPFMRAPGPIHYPSQDPQRMGAHAGKHSSP</sequence>
<reference key="1">
    <citation type="submission" date="2005-10" db="EMBL/GenBank/DDBJ databases">
        <authorList>
            <consortium name="NIH - Mammalian Gene Collection (MGC) project"/>
        </authorList>
    </citation>
    <scope>NUCLEOTIDE SEQUENCE [LARGE SCALE MRNA]</scope>
    <source>
        <strain>Hereford</strain>
        <tissue>Thymus</tissue>
    </source>
</reference>
<keyword id="KW-0007">Acetylation</keyword>
<keyword id="KW-0963">Cytoplasm</keyword>
<keyword id="KW-1017">Isopeptide bond</keyword>
<keyword id="KW-0479">Metal-binding</keyword>
<keyword id="KW-0507">mRNA processing</keyword>
<keyword id="KW-0508">mRNA splicing</keyword>
<keyword id="KW-0539">Nucleus</keyword>
<keyword id="KW-0597">Phosphoprotein</keyword>
<keyword id="KW-1185">Reference proteome</keyword>
<keyword id="KW-0694">RNA-binding</keyword>
<keyword id="KW-0747">Spliceosome</keyword>
<keyword id="KW-0813">Transport</keyword>
<keyword id="KW-0832">Ubl conjugation</keyword>
<keyword id="KW-0862">Zinc</keyword>
<keyword id="KW-0863">Zinc-finger</keyword>
<gene>
    <name type="primary">RBM22</name>
</gene>
<comment type="function">
    <text evidence="2">Required for pre-mRNA splicing as component of the activated spliceosome. Involved in the first step of pre-mRNA splicing. Binds directly to the internal stem-loop (ISL) domain of the U6 snRNA and to the pre-mRNA intron near the 5' splice site during the activation and catalytic phases of the spliceosome cycle. Involved in both translocations of the nuclear SLU7 to the cytoplasm and the cytosolic calcium-binding protein PDCD6 to the nucleus upon cellular stress responses.</text>
</comment>
<comment type="subunit">
    <text evidence="2">Component of the pre-catalytic and catalytic spliceosome complexes. Component of the postcatalytic spliceosome P complex. Interacts with PDCD6; the interaction induces translocation of PDCD6 in the cytoplasm. Interacts with PPIL1 (By similarity).</text>
</comment>
<comment type="subcellular location">
    <subcellularLocation>
        <location evidence="2">Nucleus</location>
    </subcellularLocation>
    <subcellularLocation>
        <location evidence="2">Cytoplasm</location>
    </subcellularLocation>
    <text evidence="2">Nearly exclusively nuclear. Translocated from the nucleus to the cytoplasm after heat shock cell treatment. May be shuttling between the nucleus and the cytosol.</text>
</comment>
<comment type="domain">
    <text evidence="1">The C-terminal RRM domain and the zinc finger motif are necessary for RNA-binding.</text>
</comment>
<comment type="similarity">
    <text evidence="6">Belongs to the SLT11 family.</text>
</comment>
<evidence type="ECO:0000250" key="1"/>
<evidence type="ECO:0000250" key="2">
    <source>
        <dbReference type="UniProtKB" id="Q9NW64"/>
    </source>
</evidence>
<evidence type="ECO:0000255" key="3">
    <source>
        <dbReference type="PROSITE-ProRule" id="PRU00176"/>
    </source>
</evidence>
<evidence type="ECO:0000255" key="4">
    <source>
        <dbReference type="PROSITE-ProRule" id="PRU00723"/>
    </source>
</evidence>
<evidence type="ECO:0000256" key="5">
    <source>
        <dbReference type="SAM" id="MobiDB-lite"/>
    </source>
</evidence>
<evidence type="ECO:0000305" key="6"/>
<organism>
    <name type="scientific">Bos taurus</name>
    <name type="common">Bovine</name>
    <dbReference type="NCBI Taxonomy" id="9913"/>
    <lineage>
        <taxon>Eukaryota</taxon>
        <taxon>Metazoa</taxon>
        <taxon>Chordata</taxon>
        <taxon>Craniata</taxon>
        <taxon>Vertebrata</taxon>
        <taxon>Euteleostomi</taxon>
        <taxon>Mammalia</taxon>
        <taxon>Eutheria</taxon>
        <taxon>Laurasiatheria</taxon>
        <taxon>Artiodactyla</taxon>
        <taxon>Ruminantia</taxon>
        <taxon>Pecora</taxon>
        <taxon>Bovidae</taxon>
        <taxon>Bovinae</taxon>
        <taxon>Bos</taxon>
    </lineage>
</organism>